<feature type="signal peptide" evidence="1">
    <location>
        <begin position="1"/>
        <end position="19"/>
    </location>
</feature>
<feature type="chain" id="PRO_5011945123" description="Receptor like protein 26">
    <location>
        <begin position="20"/>
        <end position="800"/>
    </location>
</feature>
<feature type="topological domain" description="Extracellular" evidence="1">
    <location>
        <begin position="20"/>
        <end position="733"/>
    </location>
</feature>
<feature type="transmembrane region" description="Helical" evidence="1">
    <location>
        <begin position="734"/>
        <end position="754"/>
    </location>
</feature>
<feature type="topological domain" description="Cytoplasmic" evidence="1">
    <location>
        <begin position="755"/>
        <end position="800"/>
    </location>
</feature>
<feature type="repeat" description="LRR 1" evidence="1">
    <location>
        <begin position="89"/>
        <end position="113"/>
    </location>
</feature>
<feature type="repeat" description="LRR 2" evidence="1">
    <location>
        <begin position="115"/>
        <end position="138"/>
    </location>
</feature>
<feature type="repeat" description="LRR 3" evidence="1">
    <location>
        <begin position="139"/>
        <end position="161"/>
    </location>
</feature>
<feature type="repeat" description="LRR 4" evidence="1">
    <location>
        <begin position="162"/>
        <end position="185"/>
    </location>
</feature>
<feature type="repeat" description="LRR 5" evidence="1">
    <location>
        <begin position="187"/>
        <end position="212"/>
    </location>
</feature>
<feature type="repeat" description="LRR 6" evidence="1">
    <location>
        <begin position="214"/>
        <end position="235"/>
    </location>
</feature>
<feature type="repeat" description="LRR 7" evidence="1">
    <location>
        <begin position="236"/>
        <end position="259"/>
    </location>
</feature>
<feature type="repeat" description="LRR 8" evidence="1">
    <location>
        <begin position="260"/>
        <end position="281"/>
    </location>
</feature>
<feature type="repeat" description="LRR 9" evidence="1">
    <location>
        <begin position="285"/>
        <end position="307"/>
    </location>
</feature>
<feature type="repeat" description="LRR 10" evidence="1">
    <location>
        <begin position="308"/>
        <end position="332"/>
    </location>
</feature>
<feature type="repeat" description="LRR 11" evidence="1">
    <location>
        <begin position="334"/>
        <end position="357"/>
    </location>
</feature>
<feature type="repeat" description="LRR 12" evidence="1">
    <location>
        <begin position="358"/>
        <end position="381"/>
    </location>
</feature>
<feature type="repeat" description="LRR 13; degenerate" evidence="4">
    <location>
        <begin position="382"/>
        <end position="401"/>
    </location>
</feature>
<feature type="repeat" description="LRR 14" evidence="1">
    <location>
        <begin position="402"/>
        <end position="423"/>
    </location>
</feature>
<feature type="repeat" description="LRR 15" evidence="1">
    <location>
        <begin position="424"/>
        <end position="446"/>
    </location>
</feature>
<feature type="repeat" description="LRR 16" evidence="1">
    <location>
        <begin position="448"/>
        <end position="471"/>
    </location>
</feature>
<feature type="repeat" description="LRR 17" evidence="1">
    <location>
        <begin position="472"/>
        <end position="494"/>
    </location>
</feature>
<feature type="repeat" description="LRR 18" evidence="1">
    <location>
        <begin position="495"/>
        <end position="519"/>
    </location>
</feature>
<feature type="repeat" description="LRR 19" evidence="1">
    <location>
        <begin position="522"/>
        <end position="546"/>
    </location>
</feature>
<feature type="repeat" description="LRR 20" evidence="1">
    <location>
        <begin position="591"/>
        <end position="615"/>
    </location>
</feature>
<feature type="repeat" description="LRR 21" evidence="1">
    <location>
        <begin position="616"/>
        <end position="639"/>
    </location>
</feature>
<feature type="repeat" description="LRR 22" evidence="1">
    <location>
        <begin position="640"/>
        <end position="663"/>
    </location>
</feature>
<feature type="repeat" description="LRR 23" evidence="1">
    <location>
        <begin position="665"/>
        <end position="688"/>
    </location>
</feature>
<feature type="glycosylation site" description="N-linked (GlcNAc...) asparagine" evidence="2">
    <location>
        <position position="49"/>
    </location>
</feature>
<feature type="glycosylation site" description="N-linked (GlcNAc...) asparagine" evidence="2">
    <location>
        <position position="61"/>
    </location>
</feature>
<feature type="glycosylation site" description="N-linked (GlcNAc...) asparagine" evidence="2">
    <location>
        <position position="83"/>
    </location>
</feature>
<feature type="glycosylation site" description="N-linked (GlcNAc...) asparagine" evidence="2">
    <location>
        <position position="96"/>
    </location>
</feature>
<feature type="glycosylation site" description="N-linked (GlcNAc...) asparagine" evidence="2">
    <location>
        <position position="101"/>
    </location>
</feature>
<feature type="glycosylation site" description="N-linked (GlcNAc...) asparagine" evidence="2">
    <location>
        <position position="113"/>
    </location>
</feature>
<feature type="glycosylation site" description="N-linked (GlcNAc...) asparagine" evidence="2">
    <location>
        <position position="145"/>
    </location>
</feature>
<feature type="glycosylation site" description="N-linked (GlcNAc...) asparagine" evidence="2">
    <location>
        <position position="160"/>
    </location>
</feature>
<feature type="glycosylation site" description="N-linked (GlcNAc...) asparagine" evidence="2">
    <location>
        <position position="207"/>
    </location>
</feature>
<feature type="glycosylation site" description="N-linked (GlcNAc...) asparagine" evidence="2">
    <location>
        <position position="247"/>
    </location>
</feature>
<feature type="glycosylation site" description="N-linked (GlcNAc...) asparagine" evidence="2">
    <location>
        <position position="342"/>
    </location>
</feature>
<feature type="glycosylation site" description="N-linked (GlcNAc...) asparagine" evidence="2">
    <location>
        <position position="357"/>
    </location>
</feature>
<feature type="glycosylation site" description="N-linked (GlcNAc...) asparagine" evidence="2">
    <location>
        <position position="388"/>
    </location>
</feature>
<feature type="glycosylation site" description="N-linked (GlcNAc...) asparagine" evidence="2">
    <location>
        <position position="401"/>
    </location>
</feature>
<feature type="glycosylation site" description="N-linked (GlcNAc...) asparagine" evidence="2">
    <location>
        <position position="470"/>
    </location>
</feature>
<feature type="glycosylation site" description="N-linked (GlcNAc...) asparagine" evidence="2">
    <location>
        <position position="622"/>
    </location>
</feature>
<feature type="glycosylation site" description="N-linked (GlcNAc...) asparagine" evidence="2">
    <location>
        <position position="638"/>
    </location>
</feature>
<comment type="subcellular location">
    <subcellularLocation>
        <location evidence="4">Cell membrane</location>
        <topology evidence="4">Single-pass type I membrane protein</topology>
    </subcellularLocation>
</comment>
<comment type="similarity">
    <text evidence="4">Belongs to the RLP family.</text>
</comment>
<comment type="sequence caution" evidence="4">
    <conflict type="erroneous gene model prediction">
        <sequence resource="EMBL-CDS" id="AAM14860"/>
    </conflict>
</comment>
<proteinExistence type="evidence at transcript level"/>
<name>RLP26_ARATH</name>
<reference key="1">
    <citation type="journal article" date="1999" name="Nature">
        <title>Sequence and analysis of chromosome 2 of the plant Arabidopsis thaliana.</title>
        <authorList>
            <person name="Lin X."/>
            <person name="Kaul S."/>
            <person name="Rounsley S.D."/>
            <person name="Shea T.P."/>
            <person name="Benito M.-I."/>
            <person name="Town C.D."/>
            <person name="Fujii C.Y."/>
            <person name="Mason T.M."/>
            <person name="Bowman C.L."/>
            <person name="Barnstead M.E."/>
            <person name="Feldblyum T.V."/>
            <person name="Buell C.R."/>
            <person name="Ketchum K.A."/>
            <person name="Lee J.J."/>
            <person name="Ronning C.M."/>
            <person name="Koo H.L."/>
            <person name="Moffat K.S."/>
            <person name="Cronin L.A."/>
            <person name="Shen M."/>
            <person name="Pai G."/>
            <person name="Van Aken S."/>
            <person name="Umayam L."/>
            <person name="Tallon L.J."/>
            <person name="Gill J.E."/>
            <person name="Adams M.D."/>
            <person name="Carrera A.J."/>
            <person name="Creasy T.H."/>
            <person name="Goodman H.M."/>
            <person name="Somerville C.R."/>
            <person name="Copenhaver G.P."/>
            <person name="Preuss D."/>
            <person name="Nierman W.C."/>
            <person name="White O."/>
            <person name="Eisen J.A."/>
            <person name="Salzberg S.L."/>
            <person name="Fraser C.M."/>
            <person name="Venter J.C."/>
        </authorList>
    </citation>
    <scope>NUCLEOTIDE SEQUENCE [LARGE SCALE GENOMIC DNA]</scope>
    <source>
        <strain>cv. Columbia</strain>
    </source>
</reference>
<reference key="2">
    <citation type="journal article" date="2017" name="Plant J.">
        <title>Araport11: a complete reannotation of the Arabidopsis thaliana reference genome.</title>
        <authorList>
            <person name="Cheng C.Y."/>
            <person name="Krishnakumar V."/>
            <person name="Chan A.P."/>
            <person name="Thibaud-Nissen F."/>
            <person name="Schobel S."/>
            <person name="Town C.D."/>
        </authorList>
    </citation>
    <scope>GENOME REANNOTATION</scope>
    <source>
        <strain>cv. Columbia</strain>
    </source>
</reference>
<reference key="3">
    <citation type="journal article" date="2003" name="Science">
        <title>Empirical analysis of transcriptional activity in the Arabidopsis genome.</title>
        <authorList>
            <person name="Yamada K."/>
            <person name="Lim J."/>
            <person name="Dale J.M."/>
            <person name="Chen H."/>
            <person name="Shinn P."/>
            <person name="Palm C.J."/>
            <person name="Southwick A.M."/>
            <person name="Wu H.C."/>
            <person name="Kim C.J."/>
            <person name="Nguyen M."/>
            <person name="Pham P.K."/>
            <person name="Cheuk R.F."/>
            <person name="Karlin-Newmann G."/>
            <person name="Liu S.X."/>
            <person name="Lam B."/>
            <person name="Sakano H."/>
            <person name="Wu T."/>
            <person name="Yu G."/>
            <person name="Miranda M."/>
            <person name="Quach H.L."/>
            <person name="Tripp M."/>
            <person name="Chang C.H."/>
            <person name="Lee J.M."/>
            <person name="Toriumi M.J."/>
            <person name="Chan M.M."/>
            <person name="Tang C.C."/>
            <person name="Onodera C.S."/>
            <person name="Deng J.M."/>
            <person name="Akiyama K."/>
            <person name="Ansari Y."/>
            <person name="Arakawa T."/>
            <person name="Banh J."/>
            <person name="Banno F."/>
            <person name="Bowser L."/>
            <person name="Brooks S.Y."/>
            <person name="Carninci P."/>
            <person name="Chao Q."/>
            <person name="Choy N."/>
            <person name="Enju A."/>
            <person name="Goldsmith A.D."/>
            <person name="Gurjal M."/>
            <person name="Hansen N.F."/>
            <person name="Hayashizaki Y."/>
            <person name="Johnson-Hopson C."/>
            <person name="Hsuan V.W."/>
            <person name="Iida K."/>
            <person name="Karnes M."/>
            <person name="Khan S."/>
            <person name="Koesema E."/>
            <person name="Ishida J."/>
            <person name="Jiang P.X."/>
            <person name="Jones T."/>
            <person name="Kawai J."/>
            <person name="Kamiya A."/>
            <person name="Meyers C."/>
            <person name="Nakajima M."/>
            <person name="Narusaka M."/>
            <person name="Seki M."/>
            <person name="Sakurai T."/>
            <person name="Satou M."/>
            <person name="Tamse R."/>
            <person name="Vaysberg M."/>
            <person name="Wallender E.K."/>
            <person name="Wong C."/>
            <person name="Yamamura Y."/>
            <person name="Yuan S."/>
            <person name="Shinozaki K."/>
            <person name="Davis R.W."/>
            <person name="Theologis A."/>
            <person name="Ecker J.R."/>
        </authorList>
    </citation>
    <scope>NUCLEOTIDE SEQUENCE [LARGE SCALE MRNA]</scope>
    <source>
        <strain>cv. Columbia</strain>
    </source>
</reference>
<reference key="4">
    <citation type="journal article" date="2005" name="Plant Physiol.">
        <title>Phylogenomic analysis of the receptor-like proteins of rice and Arabidopsis.</title>
        <authorList>
            <person name="Fritz-Laylin L.K."/>
            <person name="Krishnamurthy N."/>
            <person name="Toer M."/>
            <person name="Sjoelander K.V."/>
            <person name="Jones J.D."/>
        </authorList>
    </citation>
    <scope>GENE FAMILY</scope>
</reference>
<reference key="5">
    <citation type="journal article" date="2008" name="Plant Physiol.">
        <title>A genome-wide functional investigation into the roles of receptor-like proteins in Arabidopsis.</title>
        <authorList>
            <person name="Wang G."/>
            <person name="Ellendorff U."/>
            <person name="Kemp B."/>
            <person name="Mansfield J.W."/>
            <person name="Forsyth A."/>
            <person name="Mitchell K."/>
            <person name="Bastas K."/>
            <person name="Liu C.-M."/>
            <person name="Woods-Toer A."/>
            <person name="Zipfel C."/>
            <person name="de Wit P.J.G.M."/>
            <person name="Jones J.D.G."/>
            <person name="Toer M."/>
            <person name="Thomma B.P.H.J."/>
        </authorList>
    </citation>
    <scope>GENE FAMILY</scope>
    <scope>NOMENCLATURE</scope>
</reference>
<accession>O49328</accession>
<accession>Q8RWV6</accession>
<accession>Q8S8T0</accession>
<gene>
    <name evidence="3" type="primary">RLP26</name>
    <name evidence="5" type="ordered locus">At2g33050</name>
    <name evidence="6" type="ORF">F25I18.21</name>
    <name evidence="7" type="ORF">T21L14</name>
</gene>
<organism>
    <name type="scientific">Arabidopsis thaliana</name>
    <name type="common">Mouse-ear cress</name>
    <dbReference type="NCBI Taxonomy" id="3702"/>
    <lineage>
        <taxon>Eukaryota</taxon>
        <taxon>Viridiplantae</taxon>
        <taxon>Streptophyta</taxon>
        <taxon>Embryophyta</taxon>
        <taxon>Tracheophyta</taxon>
        <taxon>Spermatophyta</taxon>
        <taxon>Magnoliopsida</taxon>
        <taxon>eudicotyledons</taxon>
        <taxon>Gunneridae</taxon>
        <taxon>Pentapetalae</taxon>
        <taxon>rosids</taxon>
        <taxon>malvids</taxon>
        <taxon>Brassicales</taxon>
        <taxon>Brassicaceae</taxon>
        <taxon>Camelineae</taxon>
        <taxon>Arabidopsis</taxon>
    </lineage>
</organism>
<evidence type="ECO:0000255" key="1"/>
<evidence type="ECO:0000255" key="2">
    <source>
        <dbReference type="PROSITE-ProRule" id="PRU00498"/>
    </source>
</evidence>
<evidence type="ECO:0000303" key="3">
    <source>
    </source>
</evidence>
<evidence type="ECO:0000305" key="4"/>
<evidence type="ECO:0000312" key="5">
    <source>
        <dbReference type="Araport" id="AT2G33050"/>
    </source>
</evidence>
<evidence type="ECO:0000312" key="6">
    <source>
        <dbReference type="EMBL" id="AAC04915.1"/>
    </source>
</evidence>
<evidence type="ECO:0000312" key="7">
    <source>
        <dbReference type="EMBL" id="AAM14860.1"/>
    </source>
</evidence>
<dbReference type="EMBL" id="AC002334">
    <property type="protein sequence ID" value="AAC04915.1"/>
    <property type="molecule type" value="Genomic_DNA"/>
</dbReference>
<dbReference type="EMBL" id="AC003033">
    <property type="protein sequence ID" value="AAM14860.1"/>
    <property type="status" value="ALT_SEQ"/>
    <property type="molecule type" value="Genomic_DNA"/>
</dbReference>
<dbReference type="EMBL" id="CP002685">
    <property type="protein sequence ID" value="AEC08778.1"/>
    <property type="molecule type" value="Genomic_DNA"/>
</dbReference>
<dbReference type="EMBL" id="AY091081">
    <property type="protein sequence ID" value="AAM13901.1"/>
    <property type="molecule type" value="mRNA"/>
</dbReference>
<dbReference type="EMBL" id="BT002326">
    <property type="protein sequence ID" value="AAN86159.1"/>
    <property type="molecule type" value="mRNA"/>
</dbReference>
<dbReference type="PIR" id="G84740">
    <property type="entry name" value="G84740"/>
</dbReference>
<dbReference type="PIR" id="T01102">
    <property type="entry name" value="T01102"/>
</dbReference>
<dbReference type="RefSeq" id="NP_180864.1">
    <property type="nucleotide sequence ID" value="NM_128865.2"/>
</dbReference>
<dbReference type="SMR" id="O49328"/>
<dbReference type="STRING" id="3702.O49328"/>
<dbReference type="GlyCosmos" id="O49328">
    <property type="glycosylation" value="17 sites, No reported glycans"/>
</dbReference>
<dbReference type="GlyGen" id="O49328">
    <property type="glycosylation" value="18 sites"/>
</dbReference>
<dbReference type="iPTMnet" id="O49328"/>
<dbReference type="PaxDb" id="3702-AT2G33050.1"/>
<dbReference type="ProteomicsDB" id="228173"/>
<dbReference type="EnsemblPlants" id="AT2G33050.1">
    <property type="protein sequence ID" value="AT2G33050.1"/>
    <property type="gene ID" value="AT2G33050"/>
</dbReference>
<dbReference type="GeneID" id="817867"/>
<dbReference type="Gramene" id="AT2G33050.1">
    <property type="protein sequence ID" value="AT2G33050.1"/>
    <property type="gene ID" value="AT2G33050"/>
</dbReference>
<dbReference type="KEGG" id="ath:AT2G33050"/>
<dbReference type="Araport" id="AT2G33050"/>
<dbReference type="TAIR" id="AT2G33050">
    <property type="gene designation" value="RLP26"/>
</dbReference>
<dbReference type="eggNOG" id="KOG0619">
    <property type="taxonomic scope" value="Eukaryota"/>
</dbReference>
<dbReference type="HOGENOM" id="CLU_000288_18_3_1"/>
<dbReference type="InParanoid" id="O49328"/>
<dbReference type="OMA" id="AYYVYED"/>
<dbReference type="OrthoDB" id="1394818at2759"/>
<dbReference type="PhylomeDB" id="O49328"/>
<dbReference type="PRO" id="PR:O49328"/>
<dbReference type="Proteomes" id="UP000006548">
    <property type="component" value="Chromosome 2"/>
</dbReference>
<dbReference type="ExpressionAtlas" id="O49328">
    <property type="expression patterns" value="baseline"/>
</dbReference>
<dbReference type="GO" id="GO:0005886">
    <property type="term" value="C:plasma membrane"/>
    <property type="evidence" value="ECO:0007669"/>
    <property type="project" value="UniProtKB-SubCell"/>
</dbReference>
<dbReference type="FunFam" id="3.80.10.10:FF:000111">
    <property type="entry name" value="LRR receptor-like serine/threonine-protein kinase ERECTA"/>
    <property type="match status" value="1"/>
</dbReference>
<dbReference type="FunFam" id="3.80.10.10:FF:000095">
    <property type="entry name" value="LRR receptor-like serine/threonine-protein kinase GSO1"/>
    <property type="match status" value="1"/>
</dbReference>
<dbReference type="FunFam" id="3.80.10.10:FF:002352">
    <property type="entry name" value="Receptor like protein 28"/>
    <property type="match status" value="1"/>
</dbReference>
<dbReference type="Gene3D" id="3.80.10.10">
    <property type="entry name" value="Ribonuclease Inhibitor"/>
    <property type="match status" value="2"/>
</dbReference>
<dbReference type="InterPro" id="IPR001611">
    <property type="entry name" value="Leu-rich_rpt"/>
</dbReference>
<dbReference type="InterPro" id="IPR003591">
    <property type="entry name" value="Leu-rich_rpt_typical-subtyp"/>
</dbReference>
<dbReference type="InterPro" id="IPR032675">
    <property type="entry name" value="LRR_dom_sf"/>
</dbReference>
<dbReference type="PANTHER" id="PTHR48052:SF8">
    <property type="entry name" value="LRR RECEPTOR-LIKE SERINE_THREONINE-PROTEIN KINASE FLS2"/>
    <property type="match status" value="1"/>
</dbReference>
<dbReference type="PANTHER" id="PTHR48052">
    <property type="entry name" value="UNNAMED PRODUCT"/>
    <property type="match status" value="1"/>
</dbReference>
<dbReference type="Pfam" id="PF00560">
    <property type="entry name" value="LRR_1"/>
    <property type="match status" value="7"/>
</dbReference>
<dbReference type="Pfam" id="PF13855">
    <property type="entry name" value="LRR_8"/>
    <property type="match status" value="2"/>
</dbReference>
<dbReference type="PRINTS" id="PR00019">
    <property type="entry name" value="LEURICHRPT"/>
</dbReference>
<dbReference type="SMART" id="SM00369">
    <property type="entry name" value="LRR_TYP"/>
    <property type="match status" value="7"/>
</dbReference>
<dbReference type="SUPFAM" id="SSF52058">
    <property type="entry name" value="L domain-like"/>
    <property type="match status" value="2"/>
</dbReference>
<dbReference type="PROSITE" id="PS51450">
    <property type="entry name" value="LRR"/>
    <property type="match status" value="12"/>
</dbReference>
<keyword id="KW-1003">Cell membrane</keyword>
<keyword id="KW-0325">Glycoprotein</keyword>
<keyword id="KW-0433">Leucine-rich repeat</keyword>
<keyword id="KW-0472">Membrane</keyword>
<keyword id="KW-0675">Receptor</keyword>
<keyword id="KW-1185">Reference proteome</keyword>
<keyword id="KW-0677">Repeat</keyword>
<keyword id="KW-0732">Signal</keyword>
<keyword id="KW-0812">Transmembrane</keyword>
<keyword id="KW-1133">Transmembrane helix</keyword>
<protein>
    <recommendedName>
        <fullName evidence="3">Receptor like protein 26</fullName>
        <shortName evidence="3">AtRLP26</shortName>
    </recommendedName>
</protein>
<sequence>MRLHFCSLLLLYCIVFVSSFLTTDALACLPDQIQALIQFKNEFESDGCNRSDYLNGVQCDNTTGAVTKLQLPSGCFTGTLKPNSSLFELHQLRYLNLSHNNFTSSSLPSEFSNLTRLEVLSLASSSFTGQVPSSISNLILLTHLNLSHNELTGSFPPVRNLTKLSFLDLSYNQFSGAIPFDLLPTLPFLSYLDLKKNHLTGSIDVPNSSSSSKLVRLSLGFNQFEGKIIEPISKLINLNHLELASLNISHPIDLRVFAPLKSLLVFDIRQNRLLPASLSSDSEFPLSLISLILIQCDIIEFPNIFKTLQNLEHIDISNNLIKGKVPEWFWKLPRLSIANLVNNSLTGFEGSSEVLLNSSVQLLDFAYNSMTGAFPTPPLGSIYLSAWNNSFTGNIPLSICNRSSLIVLDLSYNKFTGPIPQCLSNLKVVNLRKNSLEGSIPDEFHSGAKTQTLDVGYNRLTGKLPKSLLNCSSLRFLSVDNNRIEDTFPFWLKALPNLHVLTLRSNRFFGHLSPPDRGPLAFPELRILELSDNSFTGSLPPNFFVNWKASSPKINEDGRIYMGDYKNAYYIYEDTMDLQYKGLFMEQGKVLTFYSTIDFSGNKLEGQIPESIGLLKELIALNLSNNAFTGHIPMSLANVTELESLDLSRNQLSGNIPRELGSLSFLAYISVAHNQLKGEIPQGPQFSGQAESSFEGNVGLCGLPLQGSCVAPPTKYPKEEDEEEEEDEVIEWKAVFFGYWPGLLLGLVMAHVIASFKPKWFVKILGPAKGKQVDPVRLFMNLDSRWDSFNNKDTVEEEVI</sequence>